<dbReference type="EC" id="2.4.99.17" evidence="1"/>
<dbReference type="EMBL" id="CP001098">
    <property type="protein sequence ID" value="ACL69980.1"/>
    <property type="molecule type" value="Genomic_DNA"/>
</dbReference>
<dbReference type="RefSeq" id="WP_012636164.1">
    <property type="nucleotide sequence ID" value="NC_011899.1"/>
</dbReference>
<dbReference type="SMR" id="B8CXG1"/>
<dbReference type="STRING" id="373903.Hore_12300"/>
<dbReference type="KEGG" id="hor:Hore_12300"/>
<dbReference type="eggNOG" id="COG0809">
    <property type="taxonomic scope" value="Bacteria"/>
</dbReference>
<dbReference type="HOGENOM" id="CLU_039110_1_0_9"/>
<dbReference type="OrthoDB" id="9805933at2"/>
<dbReference type="UniPathway" id="UPA00392"/>
<dbReference type="Proteomes" id="UP000000719">
    <property type="component" value="Chromosome"/>
</dbReference>
<dbReference type="GO" id="GO:0005737">
    <property type="term" value="C:cytoplasm"/>
    <property type="evidence" value="ECO:0007669"/>
    <property type="project" value="UniProtKB-SubCell"/>
</dbReference>
<dbReference type="GO" id="GO:0051075">
    <property type="term" value="F:S-adenosylmethionine:tRNA ribosyltransferase-isomerase activity"/>
    <property type="evidence" value="ECO:0007669"/>
    <property type="project" value="UniProtKB-EC"/>
</dbReference>
<dbReference type="GO" id="GO:0008616">
    <property type="term" value="P:queuosine biosynthetic process"/>
    <property type="evidence" value="ECO:0007669"/>
    <property type="project" value="UniProtKB-UniRule"/>
</dbReference>
<dbReference type="GO" id="GO:0002099">
    <property type="term" value="P:tRNA wobble guanine modification"/>
    <property type="evidence" value="ECO:0007669"/>
    <property type="project" value="TreeGrafter"/>
</dbReference>
<dbReference type="FunFam" id="2.40.10.240:FF:000002">
    <property type="entry name" value="S-adenosylmethionine:tRNA ribosyltransferase-isomerase"/>
    <property type="match status" value="1"/>
</dbReference>
<dbReference type="FunFam" id="3.40.1780.10:FF:000001">
    <property type="entry name" value="S-adenosylmethionine:tRNA ribosyltransferase-isomerase"/>
    <property type="match status" value="1"/>
</dbReference>
<dbReference type="Gene3D" id="2.40.10.240">
    <property type="entry name" value="QueA-like"/>
    <property type="match status" value="1"/>
</dbReference>
<dbReference type="Gene3D" id="3.40.1780.10">
    <property type="entry name" value="QueA-like"/>
    <property type="match status" value="1"/>
</dbReference>
<dbReference type="HAMAP" id="MF_00113">
    <property type="entry name" value="QueA"/>
    <property type="match status" value="1"/>
</dbReference>
<dbReference type="InterPro" id="IPR003699">
    <property type="entry name" value="QueA"/>
</dbReference>
<dbReference type="InterPro" id="IPR042118">
    <property type="entry name" value="QueA_dom1"/>
</dbReference>
<dbReference type="InterPro" id="IPR042119">
    <property type="entry name" value="QueA_dom2"/>
</dbReference>
<dbReference type="InterPro" id="IPR036100">
    <property type="entry name" value="QueA_sf"/>
</dbReference>
<dbReference type="NCBIfam" id="NF001140">
    <property type="entry name" value="PRK00147.1"/>
    <property type="match status" value="1"/>
</dbReference>
<dbReference type="NCBIfam" id="TIGR00113">
    <property type="entry name" value="queA"/>
    <property type="match status" value="1"/>
</dbReference>
<dbReference type="PANTHER" id="PTHR30307">
    <property type="entry name" value="S-ADENOSYLMETHIONINE:TRNA RIBOSYLTRANSFERASE-ISOMERASE"/>
    <property type="match status" value="1"/>
</dbReference>
<dbReference type="PANTHER" id="PTHR30307:SF0">
    <property type="entry name" value="S-ADENOSYLMETHIONINE:TRNA RIBOSYLTRANSFERASE-ISOMERASE"/>
    <property type="match status" value="1"/>
</dbReference>
<dbReference type="Pfam" id="PF02547">
    <property type="entry name" value="Queuosine_synth"/>
    <property type="match status" value="1"/>
</dbReference>
<dbReference type="SUPFAM" id="SSF111337">
    <property type="entry name" value="QueA-like"/>
    <property type="match status" value="1"/>
</dbReference>
<comment type="function">
    <text evidence="1">Transfers and isomerizes the ribose moiety from AdoMet to the 7-aminomethyl group of 7-deazaguanine (preQ1-tRNA) to give epoxyqueuosine (oQ-tRNA).</text>
</comment>
<comment type="catalytic activity">
    <reaction evidence="1">
        <text>7-aminomethyl-7-carbaguanosine(34) in tRNA + S-adenosyl-L-methionine = epoxyqueuosine(34) in tRNA + adenine + L-methionine + 2 H(+)</text>
        <dbReference type="Rhea" id="RHEA:32155"/>
        <dbReference type="Rhea" id="RHEA-COMP:10342"/>
        <dbReference type="Rhea" id="RHEA-COMP:18582"/>
        <dbReference type="ChEBI" id="CHEBI:15378"/>
        <dbReference type="ChEBI" id="CHEBI:16708"/>
        <dbReference type="ChEBI" id="CHEBI:57844"/>
        <dbReference type="ChEBI" id="CHEBI:59789"/>
        <dbReference type="ChEBI" id="CHEBI:82833"/>
        <dbReference type="ChEBI" id="CHEBI:194443"/>
        <dbReference type="EC" id="2.4.99.17"/>
    </reaction>
</comment>
<comment type="pathway">
    <text evidence="1">tRNA modification; tRNA-queuosine biosynthesis.</text>
</comment>
<comment type="subunit">
    <text evidence="1">Monomer.</text>
</comment>
<comment type="subcellular location">
    <subcellularLocation>
        <location evidence="1">Cytoplasm</location>
    </subcellularLocation>
</comment>
<comment type="similarity">
    <text evidence="1">Belongs to the QueA family.</text>
</comment>
<reference key="1">
    <citation type="journal article" date="2009" name="PLoS ONE">
        <title>Genome analysis of the anaerobic thermohalophilic bacterium Halothermothrix orenii.</title>
        <authorList>
            <person name="Mavromatis K."/>
            <person name="Ivanova N."/>
            <person name="Anderson I."/>
            <person name="Lykidis A."/>
            <person name="Hooper S.D."/>
            <person name="Sun H."/>
            <person name="Kunin V."/>
            <person name="Lapidus A."/>
            <person name="Hugenholtz P."/>
            <person name="Patel B."/>
            <person name="Kyrpides N.C."/>
        </authorList>
    </citation>
    <scope>NUCLEOTIDE SEQUENCE [LARGE SCALE GENOMIC DNA]</scope>
    <source>
        <strain>H 168 / OCM 544 / DSM 9562</strain>
    </source>
</reference>
<name>QUEA_HALOH</name>
<feature type="chain" id="PRO_1000119156" description="S-adenosylmethionine:tRNA ribosyltransferase-isomerase">
    <location>
        <begin position="1"/>
        <end position="341"/>
    </location>
</feature>
<organism>
    <name type="scientific">Halothermothrix orenii (strain H 168 / OCM 544 / DSM 9562)</name>
    <dbReference type="NCBI Taxonomy" id="373903"/>
    <lineage>
        <taxon>Bacteria</taxon>
        <taxon>Bacillati</taxon>
        <taxon>Bacillota</taxon>
        <taxon>Clostridia</taxon>
        <taxon>Halanaerobiales</taxon>
        <taxon>Halothermotrichaceae</taxon>
        <taxon>Halothermothrix</taxon>
    </lineage>
</organism>
<gene>
    <name evidence="1" type="primary">queA</name>
    <name type="ordered locus">Hore_12300</name>
</gene>
<accession>B8CXG1</accession>
<evidence type="ECO:0000255" key="1">
    <source>
        <dbReference type="HAMAP-Rule" id="MF_00113"/>
    </source>
</evidence>
<sequence length="341" mass="38822">MKVEEFDYELPEELIAQKPLPNRDDSRLMVLHRKTGEIEETVFKNIIKFLEPGDLLVLNDTKVIPARLFGEKIPSGTRIEVLLLKSITEGLWEVLVRPGRRMKKGNRVSFGDGKLVGIVKDYTDFGGRIMQFEYDGDFDKVIEELGEMPLPPYITRKVEDKGRYQTVYARKKGSVAAPTAGLHFTDRLLKKIKEQGIGIIYLTLHVGLGTFRPVRAENVEDHKMHSEYFEVSTDVVNRIKETKEKGKKVIAVGTTVTRALESAAVEKRHLKAMRGWTDIFIYPGYNFKVIDGLITNFHLPKSTLLMLVSAFAGKDMVMSAYKLAIKNKYRFFSFGDAMLIL</sequence>
<keyword id="KW-0963">Cytoplasm</keyword>
<keyword id="KW-0671">Queuosine biosynthesis</keyword>
<keyword id="KW-1185">Reference proteome</keyword>
<keyword id="KW-0949">S-adenosyl-L-methionine</keyword>
<keyword id="KW-0808">Transferase</keyword>
<protein>
    <recommendedName>
        <fullName evidence="1">S-adenosylmethionine:tRNA ribosyltransferase-isomerase</fullName>
        <ecNumber evidence="1">2.4.99.17</ecNumber>
    </recommendedName>
    <alternativeName>
        <fullName evidence="1">Queuosine biosynthesis protein QueA</fullName>
    </alternativeName>
</protein>
<proteinExistence type="inferred from homology"/>